<dbReference type="EC" id="4.1.1.48" evidence="1"/>
<dbReference type="EMBL" id="CR628336">
    <property type="protein sequence ID" value="CAH12046.1"/>
    <property type="molecule type" value="Genomic_DNA"/>
</dbReference>
<dbReference type="RefSeq" id="WP_010946569.1">
    <property type="nucleotide sequence ID" value="NC_006368.1"/>
</dbReference>
<dbReference type="SMR" id="Q5X6S0"/>
<dbReference type="GeneID" id="57034821"/>
<dbReference type="KEGG" id="lpp:lpp0895"/>
<dbReference type="LegioList" id="lpp0895"/>
<dbReference type="HOGENOM" id="CLU_034247_2_0_6"/>
<dbReference type="UniPathway" id="UPA00035">
    <property type="reaction ID" value="UER00043"/>
</dbReference>
<dbReference type="GO" id="GO:0004425">
    <property type="term" value="F:indole-3-glycerol-phosphate synthase activity"/>
    <property type="evidence" value="ECO:0007669"/>
    <property type="project" value="UniProtKB-UniRule"/>
</dbReference>
<dbReference type="GO" id="GO:0004640">
    <property type="term" value="F:phosphoribosylanthranilate isomerase activity"/>
    <property type="evidence" value="ECO:0007669"/>
    <property type="project" value="TreeGrafter"/>
</dbReference>
<dbReference type="GO" id="GO:0000162">
    <property type="term" value="P:L-tryptophan biosynthetic process"/>
    <property type="evidence" value="ECO:0007669"/>
    <property type="project" value="UniProtKB-UniRule"/>
</dbReference>
<dbReference type="CDD" id="cd00331">
    <property type="entry name" value="IGPS"/>
    <property type="match status" value="1"/>
</dbReference>
<dbReference type="FunFam" id="3.20.20.70:FF:000024">
    <property type="entry name" value="Indole-3-glycerol phosphate synthase"/>
    <property type="match status" value="1"/>
</dbReference>
<dbReference type="Gene3D" id="3.20.20.70">
    <property type="entry name" value="Aldolase class I"/>
    <property type="match status" value="1"/>
</dbReference>
<dbReference type="HAMAP" id="MF_00134_B">
    <property type="entry name" value="IGPS_B"/>
    <property type="match status" value="1"/>
</dbReference>
<dbReference type="InterPro" id="IPR013785">
    <property type="entry name" value="Aldolase_TIM"/>
</dbReference>
<dbReference type="InterPro" id="IPR045186">
    <property type="entry name" value="Indole-3-glycerol_P_synth"/>
</dbReference>
<dbReference type="InterPro" id="IPR013798">
    <property type="entry name" value="Indole-3-glycerol_P_synth_dom"/>
</dbReference>
<dbReference type="InterPro" id="IPR001468">
    <property type="entry name" value="Indole-3-GlycerolPSynthase_CS"/>
</dbReference>
<dbReference type="InterPro" id="IPR011060">
    <property type="entry name" value="RibuloseP-bd_barrel"/>
</dbReference>
<dbReference type="NCBIfam" id="NF001373">
    <property type="entry name" value="PRK00278.1-6"/>
    <property type="match status" value="1"/>
</dbReference>
<dbReference type="NCBIfam" id="NF001377">
    <property type="entry name" value="PRK00278.2-4"/>
    <property type="match status" value="1"/>
</dbReference>
<dbReference type="PANTHER" id="PTHR22854:SF2">
    <property type="entry name" value="INDOLE-3-GLYCEROL-PHOSPHATE SYNTHASE"/>
    <property type="match status" value="1"/>
</dbReference>
<dbReference type="PANTHER" id="PTHR22854">
    <property type="entry name" value="TRYPTOPHAN BIOSYNTHESIS PROTEIN"/>
    <property type="match status" value="1"/>
</dbReference>
<dbReference type="Pfam" id="PF00218">
    <property type="entry name" value="IGPS"/>
    <property type="match status" value="1"/>
</dbReference>
<dbReference type="SUPFAM" id="SSF51366">
    <property type="entry name" value="Ribulose-phoshate binding barrel"/>
    <property type="match status" value="1"/>
</dbReference>
<dbReference type="PROSITE" id="PS00614">
    <property type="entry name" value="IGPS"/>
    <property type="match status" value="1"/>
</dbReference>
<reference key="1">
    <citation type="journal article" date="2004" name="Nat. Genet.">
        <title>Evidence in the Legionella pneumophila genome for exploitation of host cell functions and high genome plasticity.</title>
        <authorList>
            <person name="Cazalet C."/>
            <person name="Rusniok C."/>
            <person name="Brueggemann H."/>
            <person name="Zidane N."/>
            <person name="Magnier A."/>
            <person name="Ma L."/>
            <person name="Tichit M."/>
            <person name="Jarraud S."/>
            <person name="Bouchier C."/>
            <person name="Vandenesch F."/>
            <person name="Kunst F."/>
            <person name="Etienne J."/>
            <person name="Glaser P."/>
            <person name="Buchrieser C."/>
        </authorList>
    </citation>
    <scope>NUCLEOTIDE SEQUENCE [LARGE SCALE GENOMIC DNA]</scope>
    <source>
        <strain>Paris</strain>
    </source>
</reference>
<sequence length="258" mass="28950">MNSILERIAKHKLEEVAVAKKNKPLHVLSKQQPGEMRDFITALKSNTSPAVIAEIKKASPSKGLIRKDFNVAEIAKIYTQNGARCLSVLTDIEFFQGHPDYLALAKSKTTLPVLRKDFIIDSYQIYESLVLGADCILLIVALLDDVQLMDFCQLAQELKMSVLVESHTQDELERALRLPTPLIGINNRSLHNFKTDIQLSIQLKQFVPKDKIIITESGINTREDIKLMQSHGINAFLIGESLMRADNIGKALQKLMTD</sequence>
<gene>
    <name evidence="1" type="primary">trpC</name>
    <name type="ordered locus">lpp0895</name>
</gene>
<proteinExistence type="inferred from homology"/>
<protein>
    <recommendedName>
        <fullName evidence="1">Indole-3-glycerol phosphate synthase</fullName>
        <shortName evidence="1">IGPS</shortName>
        <ecNumber evidence="1">4.1.1.48</ecNumber>
    </recommendedName>
</protein>
<name>TRPC_LEGPA</name>
<evidence type="ECO:0000255" key="1">
    <source>
        <dbReference type="HAMAP-Rule" id="MF_00134"/>
    </source>
</evidence>
<accession>Q5X6S0</accession>
<organism>
    <name type="scientific">Legionella pneumophila (strain Paris)</name>
    <dbReference type="NCBI Taxonomy" id="297246"/>
    <lineage>
        <taxon>Bacteria</taxon>
        <taxon>Pseudomonadati</taxon>
        <taxon>Pseudomonadota</taxon>
        <taxon>Gammaproteobacteria</taxon>
        <taxon>Legionellales</taxon>
        <taxon>Legionellaceae</taxon>
        <taxon>Legionella</taxon>
    </lineage>
</organism>
<keyword id="KW-0028">Amino-acid biosynthesis</keyword>
<keyword id="KW-0057">Aromatic amino acid biosynthesis</keyword>
<keyword id="KW-0210">Decarboxylase</keyword>
<keyword id="KW-0456">Lyase</keyword>
<keyword id="KW-0822">Tryptophan biosynthesis</keyword>
<feature type="chain" id="PRO_1000018490" description="Indole-3-glycerol phosphate synthase">
    <location>
        <begin position="1"/>
        <end position="258"/>
    </location>
</feature>
<comment type="catalytic activity">
    <reaction evidence="1">
        <text>1-(2-carboxyphenylamino)-1-deoxy-D-ribulose 5-phosphate + H(+) = (1S,2R)-1-C-(indol-3-yl)glycerol 3-phosphate + CO2 + H2O</text>
        <dbReference type="Rhea" id="RHEA:23476"/>
        <dbReference type="ChEBI" id="CHEBI:15377"/>
        <dbReference type="ChEBI" id="CHEBI:15378"/>
        <dbReference type="ChEBI" id="CHEBI:16526"/>
        <dbReference type="ChEBI" id="CHEBI:58613"/>
        <dbReference type="ChEBI" id="CHEBI:58866"/>
        <dbReference type="EC" id="4.1.1.48"/>
    </reaction>
</comment>
<comment type="pathway">
    <text evidence="1">Amino-acid biosynthesis; L-tryptophan biosynthesis; L-tryptophan from chorismate: step 4/5.</text>
</comment>
<comment type="similarity">
    <text evidence="1">Belongs to the TrpC family.</text>
</comment>